<dbReference type="EMBL" id="FM209186">
    <property type="protein sequence ID" value="CAW25303.1"/>
    <property type="molecule type" value="Genomic_DNA"/>
</dbReference>
<dbReference type="RefSeq" id="WP_003085057.1">
    <property type="nucleotide sequence ID" value="NC_011770.1"/>
</dbReference>
<dbReference type="SMR" id="B7V4G5"/>
<dbReference type="GeneID" id="88187573"/>
<dbReference type="KEGG" id="pag:PLES_05761"/>
<dbReference type="HOGENOM" id="CLU_159258_1_0_6"/>
<dbReference type="GO" id="GO:1990904">
    <property type="term" value="C:ribonucleoprotein complex"/>
    <property type="evidence" value="ECO:0007669"/>
    <property type="project" value="UniProtKB-KW"/>
</dbReference>
<dbReference type="GO" id="GO:0005840">
    <property type="term" value="C:ribosome"/>
    <property type="evidence" value="ECO:0007669"/>
    <property type="project" value="UniProtKB-KW"/>
</dbReference>
<dbReference type="GO" id="GO:0003735">
    <property type="term" value="F:structural constituent of ribosome"/>
    <property type="evidence" value="ECO:0007669"/>
    <property type="project" value="InterPro"/>
</dbReference>
<dbReference type="GO" id="GO:0006412">
    <property type="term" value="P:translation"/>
    <property type="evidence" value="ECO:0007669"/>
    <property type="project" value="UniProtKB-UniRule"/>
</dbReference>
<dbReference type="Gene3D" id="1.20.5.1150">
    <property type="entry name" value="Ribosomal protein S8"/>
    <property type="match status" value="1"/>
</dbReference>
<dbReference type="HAMAP" id="MF_00358">
    <property type="entry name" value="Ribosomal_bS21"/>
    <property type="match status" value="1"/>
</dbReference>
<dbReference type="InterPro" id="IPR001911">
    <property type="entry name" value="Ribosomal_bS21"/>
</dbReference>
<dbReference type="InterPro" id="IPR018278">
    <property type="entry name" value="Ribosomal_bS21_CS"/>
</dbReference>
<dbReference type="InterPro" id="IPR038380">
    <property type="entry name" value="Ribosomal_bS21_sf"/>
</dbReference>
<dbReference type="NCBIfam" id="TIGR00030">
    <property type="entry name" value="S21p"/>
    <property type="match status" value="1"/>
</dbReference>
<dbReference type="PANTHER" id="PTHR21109">
    <property type="entry name" value="MITOCHONDRIAL 28S RIBOSOMAL PROTEIN S21"/>
    <property type="match status" value="1"/>
</dbReference>
<dbReference type="PANTHER" id="PTHR21109:SF22">
    <property type="entry name" value="SMALL RIBOSOMAL SUBUNIT PROTEIN BS21"/>
    <property type="match status" value="1"/>
</dbReference>
<dbReference type="Pfam" id="PF01165">
    <property type="entry name" value="Ribosomal_S21"/>
    <property type="match status" value="1"/>
</dbReference>
<dbReference type="PRINTS" id="PR00976">
    <property type="entry name" value="RIBOSOMALS21"/>
</dbReference>
<dbReference type="PROSITE" id="PS01181">
    <property type="entry name" value="RIBOSOMAL_S21"/>
    <property type="match status" value="1"/>
</dbReference>
<proteinExistence type="inferred from homology"/>
<name>RS21_PSEA8</name>
<comment type="similarity">
    <text evidence="1">Belongs to the bacterial ribosomal protein bS21 family.</text>
</comment>
<keyword id="KW-0687">Ribonucleoprotein</keyword>
<keyword id="KW-0689">Ribosomal protein</keyword>
<feature type="chain" id="PRO_1000120650" description="Small ribosomal subunit protein bS21">
    <location>
        <begin position="1"/>
        <end position="71"/>
    </location>
</feature>
<feature type="region of interest" description="Disordered" evidence="2">
    <location>
        <begin position="48"/>
        <end position="71"/>
    </location>
</feature>
<feature type="compositionally biased region" description="Basic residues" evidence="2">
    <location>
        <begin position="48"/>
        <end position="59"/>
    </location>
</feature>
<feature type="compositionally biased region" description="Basic and acidic residues" evidence="2">
    <location>
        <begin position="60"/>
        <end position="71"/>
    </location>
</feature>
<gene>
    <name evidence="1" type="primary">rpsU</name>
    <name type="ordered locus">PLES_05761</name>
</gene>
<accession>B7V4G5</accession>
<evidence type="ECO:0000255" key="1">
    <source>
        <dbReference type="HAMAP-Rule" id="MF_00358"/>
    </source>
</evidence>
<evidence type="ECO:0000256" key="2">
    <source>
        <dbReference type="SAM" id="MobiDB-lite"/>
    </source>
</evidence>
<evidence type="ECO:0000305" key="3"/>
<sequence length="71" mass="8485">MPAVKVKENEPFDVALRRFKRSCEKAGVLAEVRSREFYEKPTAERKRKAAAAVKRHAKKVQREQRRRERLY</sequence>
<organism>
    <name type="scientific">Pseudomonas aeruginosa (strain LESB58)</name>
    <dbReference type="NCBI Taxonomy" id="557722"/>
    <lineage>
        <taxon>Bacteria</taxon>
        <taxon>Pseudomonadati</taxon>
        <taxon>Pseudomonadota</taxon>
        <taxon>Gammaproteobacteria</taxon>
        <taxon>Pseudomonadales</taxon>
        <taxon>Pseudomonadaceae</taxon>
        <taxon>Pseudomonas</taxon>
    </lineage>
</organism>
<reference key="1">
    <citation type="journal article" date="2009" name="Genome Res.">
        <title>Newly introduced genomic prophage islands are critical determinants of in vivo competitiveness in the Liverpool epidemic strain of Pseudomonas aeruginosa.</title>
        <authorList>
            <person name="Winstanley C."/>
            <person name="Langille M.G.I."/>
            <person name="Fothergill J.L."/>
            <person name="Kukavica-Ibrulj I."/>
            <person name="Paradis-Bleau C."/>
            <person name="Sanschagrin F."/>
            <person name="Thomson N.R."/>
            <person name="Winsor G.L."/>
            <person name="Quail M.A."/>
            <person name="Lennard N."/>
            <person name="Bignell A."/>
            <person name="Clarke L."/>
            <person name="Seeger K."/>
            <person name="Saunders D."/>
            <person name="Harris D."/>
            <person name="Parkhill J."/>
            <person name="Hancock R.E.W."/>
            <person name="Brinkman F.S.L."/>
            <person name="Levesque R.C."/>
        </authorList>
    </citation>
    <scope>NUCLEOTIDE SEQUENCE [LARGE SCALE GENOMIC DNA]</scope>
    <source>
        <strain>LESB58</strain>
    </source>
</reference>
<protein>
    <recommendedName>
        <fullName evidence="1">Small ribosomal subunit protein bS21</fullName>
    </recommendedName>
    <alternativeName>
        <fullName evidence="3">30S ribosomal protein S21</fullName>
    </alternativeName>
</protein>